<gene>
    <name evidence="1" type="primary">fbp</name>
    <name type="ordered locus">Bcep1808_0934</name>
</gene>
<name>F16PA_BURVG</name>
<comment type="catalytic activity">
    <reaction evidence="1">
        <text>beta-D-fructose 1,6-bisphosphate + H2O = beta-D-fructose 6-phosphate + phosphate</text>
        <dbReference type="Rhea" id="RHEA:11064"/>
        <dbReference type="ChEBI" id="CHEBI:15377"/>
        <dbReference type="ChEBI" id="CHEBI:32966"/>
        <dbReference type="ChEBI" id="CHEBI:43474"/>
        <dbReference type="ChEBI" id="CHEBI:57634"/>
        <dbReference type="EC" id="3.1.3.11"/>
    </reaction>
</comment>
<comment type="cofactor">
    <cofactor evidence="1">
        <name>Mg(2+)</name>
        <dbReference type="ChEBI" id="CHEBI:18420"/>
    </cofactor>
    <text evidence="1">Binds 2 magnesium ions per subunit.</text>
</comment>
<comment type="pathway">
    <text evidence="1">Carbohydrate biosynthesis; gluconeogenesis.</text>
</comment>
<comment type="subunit">
    <text evidence="1">Homotetramer.</text>
</comment>
<comment type="subcellular location">
    <subcellularLocation>
        <location evidence="1">Cytoplasm</location>
    </subcellularLocation>
</comment>
<comment type="similarity">
    <text evidence="1">Belongs to the FBPase class 1 family.</text>
</comment>
<dbReference type="EC" id="3.1.3.11" evidence="1"/>
<dbReference type="EMBL" id="CP000614">
    <property type="protein sequence ID" value="ABO53945.1"/>
    <property type="molecule type" value="Genomic_DNA"/>
</dbReference>
<dbReference type="SMR" id="A4JCE2"/>
<dbReference type="KEGG" id="bvi:Bcep1808_0934"/>
<dbReference type="eggNOG" id="COG0158">
    <property type="taxonomic scope" value="Bacteria"/>
</dbReference>
<dbReference type="HOGENOM" id="CLU_039977_0_0_4"/>
<dbReference type="UniPathway" id="UPA00138"/>
<dbReference type="Proteomes" id="UP000002287">
    <property type="component" value="Chromosome 1"/>
</dbReference>
<dbReference type="GO" id="GO:0005829">
    <property type="term" value="C:cytosol"/>
    <property type="evidence" value="ECO:0007669"/>
    <property type="project" value="TreeGrafter"/>
</dbReference>
<dbReference type="GO" id="GO:0042132">
    <property type="term" value="F:fructose 1,6-bisphosphate 1-phosphatase activity"/>
    <property type="evidence" value="ECO:0007669"/>
    <property type="project" value="UniProtKB-UniRule"/>
</dbReference>
<dbReference type="GO" id="GO:0000287">
    <property type="term" value="F:magnesium ion binding"/>
    <property type="evidence" value="ECO:0007669"/>
    <property type="project" value="UniProtKB-UniRule"/>
</dbReference>
<dbReference type="GO" id="GO:0030388">
    <property type="term" value="P:fructose 1,6-bisphosphate metabolic process"/>
    <property type="evidence" value="ECO:0007669"/>
    <property type="project" value="TreeGrafter"/>
</dbReference>
<dbReference type="GO" id="GO:0006002">
    <property type="term" value="P:fructose 6-phosphate metabolic process"/>
    <property type="evidence" value="ECO:0007669"/>
    <property type="project" value="TreeGrafter"/>
</dbReference>
<dbReference type="GO" id="GO:0006000">
    <property type="term" value="P:fructose metabolic process"/>
    <property type="evidence" value="ECO:0007669"/>
    <property type="project" value="TreeGrafter"/>
</dbReference>
<dbReference type="GO" id="GO:0006094">
    <property type="term" value="P:gluconeogenesis"/>
    <property type="evidence" value="ECO:0007669"/>
    <property type="project" value="UniProtKB-UniRule"/>
</dbReference>
<dbReference type="GO" id="GO:0005986">
    <property type="term" value="P:sucrose biosynthetic process"/>
    <property type="evidence" value="ECO:0007669"/>
    <property type="project" value="TreeGrafter"/>
</dbReference>
<dbReference type="CDD" id="cd00354">
    <property type="entry name" value="FBPase"/>
    <property type="match status" value="1"/>
</dbReference>
<dbReference type="FunFam" id="3.30.540.10:FF:000006">
    <property type="entry name" value="Fructose-1,6-bisphosphatase class 1"/>
    <property type="match status" value="1"/>
</dbReference>
<dbReference type="FunFam" id="3.40.190.80:FF:000011">
    <property type="entry name" value="Fructose-1,6-bisphosphatase class 1"/>
    <property type="match status" value="1"/>
</dbReference>
<dbReference type="Gene3D" id="3.40.190.80">
    <property type="match status" value="1"/>
</dbReference>
<dbReference type="Gene3D" id="3.30.540.10">
    <property type="entry name" value="Fructose-1,6-Bisphosphatase, subunit A, domain 1"/>
    <property type="match status" value="1"/>
</dbReference>
<dbReference type="HAMAP" id="MF_01855">
    <property type="entry name" value="FBPase_class1"/>
    <property type="match status" value="1"/>
</dbReference>
<dbReference type="InterPro" id="IPR044015">
    <property type="entry name" value="FBPase_C_dom"/>
</dbReference>
<dbReference type="InterPro" id="IPR000146">
    <property type="entry name" value="FBPase_class-1"/>
</dbReference>
<dbReference type="InterPro" id="IPR033391">
    <property type="entry name" value="FBPase_N"/>
</dbReference>
<dbReference type="InterPro" id="IPR028343">
    <property type="entry name" value="FBPtase"/>
</dbReference>
<dbReference type="NCBIfam" id="NF006778">
    <property type="entry name" value="PRK09293.1-1"/>
    <property type="match status" value="1"/>
</dbReference>
<dbReference type="NCBIfam" id="NF006779">
    <property type="entry name" value="PRK09293.1-3"/>
    <property type="match status" value="1"/>
</dbReference>
<dbReference type="NCBIfam" id="NF006780">
    <property type="entry name" value="PRK09293.1-4"/>
    <property type="match status" value="1"/>
</dbReference>
<dbReference type="PANTHER" id="PTHR11556">
    <property type="entry name" value="FRUCTOSE-1,6-BISPHOSPHATASE-RELATED"/>
    <property type="match status" value="1"/>
</dbReference>
<dbReference type="PANTHER" id="PTHR11556:SF35">
    <property type="entry name" value="SEDOHEPTULOSE-1,7-BISPHOSPHATASE, CHLOROPLASTIC"/>
    <property type="match status" value="1"/>
</dbReference>
<dbReference type="Pfam" id="PF00316">
    <property type="entry name" value="FBPase"/>
    <property type="match status" value="1"/>
</dbReference>
<dbReference type="Pfam" id="PF18913">
    <property type="entry name" value="FBPase_C"/>
    <property type="match status" value="1"/>
</dbReference>
<dbReference type="PIRSF" id="PIRSF500210">
    <property type="entry name" value="FBPtase"/>
    <property type="match status" value="1"/>
</dbReference>
<dbReference type="PIRSF" id="PIRSF000904">
    <property type="entry name" value="FBPtase_SBPase"/>
    <property type="match status" value="1"/>
</dbReference>
<dbReference type="PRINTS" id="PR00115">
    <property type="entry name" value="F16BPHPHTASE"/>
</dbReference>
<dbReference type="SUPFAM" id="SSF56655">
    <property type="entry name" value="Carbohydrate phosphatase"/>
    <property type="match status" value="1"/>
</dbReference>
<proteinExistence type="inferred from homology"/>
<reference key="1">
    <citation type="submission" date="2007-03" db="EMBL/GenBank/DDBJ databases">
        <title>Complete sequence of chromosome 1 of Burkholderia vietnamiensis G4.</title>
        <authorList>
            <consortium name="US DOE Joint Genome Institute"/>
            <person name="Copeland A."/>
            <person name="Lucas S."/>
            <person name="Lapidus A."/>
            <person name="Barry K."/>
            <person name="Detter J.C."/>
            <person name="Glavina del Rio T."/>
            <person name="Hammon N."/>
            <person name="Israni S."/>
            <person name="Dalin E."/>
            <person name="Tice H."/>
            <person name="Pitluck S."/>
            <person name="Chain P."/>
            <person name="Malfatti S."/>
            <person name="Shin M."/>
            <person name="Vergez L."/>
            <person name="Schmutz J."/>
            <person name="Larimer F."/>
            <person name="Land M."/>
            <person name="Hauser L."/>
            <person name="Kyrpides N."/>
            <person name="Tiedje J."/>
            <person name="Richardson P."/>
        </authorList>
    </citation>
    <scope>NUCLEOTIDE SEQUENCE [LARGE SCALE GENOMIC DNA]</scope>
    <source>
        <strain>G4 / LMG 22486</strain>
    </source>
</reference>
<protein>
    <recommendedName>
        <fullName evidence="1">Fructose-1,6-bisphosphatase class 1</fullName>
        <shortName evidence="1">FBPase class 1</shortName>
        <ecNumber evidence="1">3.1.3.11</ecNumber>
    </recommendedName>
    <alternativeName>
        <fullName evidence="1">D-fructose-1,6-bisphosphate 1-phosphohydrolase class 1</fullName>
    </alternativeName>
</protein>
<keyword id="KW-0119">Carbohydrate metabolism</keyword>
<keyword id="KW-0963">Cytoplasm</keyword>
<keyword id="KW-0378">Hydrolase</keyword>
<keyword id="KW-0460">Magnesium</keyword>
<keyword id="KW-0479">Metal-binding</keyword>
<organism>
    <name type="scientific">Burkholderia vietnamiensis (strain G4 / LMG 22486)</name>
    <name type="common">Burkholderia cepacia (strain R1808)</name>
    <dbReference type="NCBI Taxonomy" id="269482"/>
    <lineage>
        <taxon>Bacteria</taxon>
        <taxon>Pseudomonadati</taxon>
        <taxon>Pseudomonadota</taxon>
        <taxon>Betaproteobacteria</taxon>
        <taxon>Burkholderiales</taxon>
        <taxon>Burkholderiaceae</taxon>
        <taxon>Burkholderia</taxon>
        <taxon>Burkholderia cepacia complex</taxon>
    </lineage>
</organism>
<sequence>MSIARRTTLSKFLIEQQRETNNLPADLRLLIEVVARACKAISYNVSKGALGDALGTAGSENVQGEVQKKLDILSNEILLDANEWGGNLAAMASEEMETFFPIPANYPRGEYLLVFDPLDGSSNIDVNVSIGTIFSVLRCPHGKQATEESFLQPGTEQVAAGYAVYGPQSVFVLTTGNGVNCFTLDREVGSWVLTQSNMQIPADTREYAINASNARHWYEPVQRYVSELNAGKEGPRGDNFNMRWIASMVADVHRILNRGGIFMYPADKRTPDRPGKLRLMYEANPMSFIVEQAGGAATTGTQRIMEVQPTGLHQRVPVFLGSKNEVERVTAYHNEGK</sequence>
<accession>A4JCE2</accession>
<evidence type="ECO:0000255" key="1">
    <source>
        <dbReference type="HAMAP-Rule" id="MF_01855"/>
    </source>
</evidence>
<feature type="chain" id="PRO_0000364505" description="Fructose-1,6-bisphosphatase class 1">
    <location>
        <begin position="1"/>
        <end position="337"/>
    </location>
</feature>
<feature type="binding site" evidence="1">
    <location>
        <position position="94"/>
    </location>
    <ligand>
        <name>Mg(2+)</name>
        <dbReference type="ChEBI" id="CHEBI:18420"/>
        <label>1</label>
    </ligand>
</feature>
<feature type="binding site" evidence="1">
    <location>
        <position position="116"/>
    </location>
    <ligand>
        <name>Mg(2+)</name>
        <dbReference type="ChEBI" id="CHEBI:18420"/>
        <label>1</label>
    </ligand>
</feature>
<feature type="binding site" evidence="1">
    <location>
        <position position="116"/>
    </location>
    <ligand>
        <name>Mg(2+)</name>
        <dbReference type="ChEBI" id="CHEBI:18420"/>
        <label>2</label>
    </ligand>
</feature>
<feature type="binding site" evidence="1">
    <location>
        <position position="118"/>
    </location>
    <ligand>
        <name>Mg(2+)</name>
        <dbReference type="ChEBI" id="CHEBI:18420"/>
        <label>1</label>
    </ligand>
</feature>
<feature type="binding site" evidence="1">
    <location>
        <begin position="119"/>
        <end position="122"/>
    </location>
    <ligand>
        <name>substrate</name>
    </ligand>
</feature>
<feature type="binding site" evidence="1">
    <location>
        <position position="119"/>
    </location>
    <ligand>
        <name>Mg(2+)</name>
        <dbReference type="ChEBI" id="CHEBI:18420"/>
        <label>2</label>
    </ligand>
</feature>
<feature type="binding site" evidence="1">
    <location>
        <position position="210"/>
    </location>
    <ligand>
        <name>substrate</name>
    </ligand>
</feature>
<feature type="binding site" evidence="1">
    <location>
        <position position="276"/>
    </location>
    <ligand>
        <name>substrate</name>
    </ligand>
</feature>
<feature type="binding site" evidence="1">
    <location>
        <position position="282"/>
    </location>
    <ligand>
        <name>Mg(2+)</name>
        <dbReference type="ChEBI" id="CHEBI:18420"/>
        <label>2</label>
    </ligand>
</feature>